<comment type="function">
    <text evidence="1">Specifically methylates the N4 position of cytidine in position 1402 (C1402) of 16S rRNA.</text>
</comment>
<comment type="catalytic activity">
    <reaction evidence="1">
        <text>cytidine(1402) in 16S rRNA + S-adenosyl-L-methionine = N(4)-methylcytidine(1402) in 16S rRNA + S-adenosyl-L-homocysteine + H(+)</text>
        <dbReference type="Rhea" id="RHEA:42928"/>
        <dbReference type="Rhea" id="RHEA-COMP:10286"/>
        <dbReference type="Rhea" id="RHEA-COMP:10287"/>
        <dbReference type="ChEBI" id="CHEBI:15378"/>
        <dbReference type="ChEBI" id="CHEBI:57856"/>
        <dbReference type="ChEBI" id="CHEBI:59789"/>
        <dbReference type="ChEBI" id="CHEBI:74506"/>
        <dbReference type="ChEBI" id="CHEBI:82748"/>
        <dbReference type="EC" id="2.1.1.199"/>
    </reaction>
</comment>
<comment type="subcellular location">
    <subcellularLocation>
        <location evidence="1">Cytoplasm</location>
    </subcellularLocation>
</comment>
<comment type="similarity">
    <text evidence="1">Belongs to the methyltransferase superfamily. RsmH family.</text>
</comment>
<sequence>MSAAEMCAVAEQEPTATTHRPVLYGAALAALDVRPDGCYVDATYGRGGHARGILERLGPQGRLWVADRDPEALAHARETLADDPRCTVLGAELAELPRLLAEQGLAAGVDGLLADLGISSPQVDNPDRGFSFQRDGPLDMRMDPTTGESAAALLERLSARDIAGVLRQLGEERHAGRIARAIVAARDAGDPPRTTLALARLVEQAVPRREPGRHPATRTFQALRIAVNDELGQLDRFLEGVIDLLAPGGRLAVIAFHSLEDRRVKRFIRRASSVGDLPPSVPVPPAGCQPRLRPLGRDLRADEGEVAGNPRARSAVLRVAERLS</sequence>
<dbReference type="EC" id="2.1.1.199" evidence="1"/>
<dbReference type="EMBL" id="CP000544">
    <property type="protein sequence ID" value="ABM62863.1"/>
    <property type="molecule type" value="Genomic_DNA"/>
</dbReference>
<dbReference type="RefSeq" id="WP_011814885.1">
    <property type="nucleotide sequence ID" value="NC_008789.1"/>
</dbReference>
<dbReference type="SMR" id="A1WYV1"/>
<dbReference type="STRING" id="349124.Hhal_2099"/>
<dbReference type="KEGG" id="hha:Hhal_2099"/>
<dbReference type="eggNOG" id="COG0275">
    <property type="taxonomic scope" value="Bacteria"/>
</dbReference>
<dbReference type="HOGENOM" id="CLU_038422_2_0_6"/>
<dbReference type="OrthoDB" id="9806637at2"/>
<dbReference type="Proteomes" id="UP000000647">
    <property type="component" value="Chromosome"/>
</dbReference>
<dbReference type="GO" id="GO:0005737">
    <property type="term" value="C:cytoplasm"/>
    <property type="evidence" value="ECO:0007669"/>
    <property type="project" value="UniProtKB-SubCell"/>
</dbReference>
<dbReference type="GO" id="GO:0071424">
    <property type="term" value="F:rRNA (cytosine-N4-)-methyltransferase activity"/>
    <property type="evidence" value="ECO:0007669"/>
    <property type="project" value="UniProtKB-UniRule"/>
</dbReference>
<dbReference type="GO" id="GO:0070475">
    <property type="term" value="P:rRNA base methylation"/>
    <property type="evidence" value="ECO:0007669"/>
    <property type="project" value="UniProtKB-UniRule"/>
</dbReference>
<dbReference type="Gene3D" id="1.10.150.170">
    <property type="entry name" value="Putative methyltransferase TM0872, insert domain"/>
    <property type="match status" value="1"/>
</dbReference>
<dbReference type="Gene3D" id="3.40.50.150">
    <property type="entry name" value="Vaccinia Virus protein VP39"/>
    <property type="match status" value="1"/>
</dbReference>
<dbReference type="HAMAP" id="MF_01007">
    <property type="entry name" value="16SrRNA_methyltr_H"/>
    <property type="match status" value="1"/>
</dbReference>
<dbReference type="InterPro" id="IPR002903">
    <property type="entry name" value="RsmH"/>
</dbReference>
<dbReference type="InterPro" id="IPR023397">
    <property type="entry name" value="SAM-dep_MeTrfase_MraW_recog"/>
</dbReference>
<dbReference type="InterPro" id="IPR029063">
    <property type="entry name" value="SAM-dependent_MTases_sf"/>
</dbReference>
<dbReference type="NCBIfam" id="TIGR00006">
    <property type="entry name" value="16S rRNA (cytosine(1402)-N(4))-methyltransferase RsmH"/>
    <property type="match status" value="1"/>
</dbReference>
<dbReference type="PANTHER" id="PTHR11265:SF0">
    <property type="entry name" value="12S RRNA N4-METHYLCYTIDINE METHYLTRANSFERASE"/>
    <property type="match status" value="1"/>
</dbReference>
<dbReference type="PANTHER" id="PTHR11265">
    <property type="entry name" value="S-ADENOSYL-METHYLTRANSFERASE MRAW"/>
    <property type="match status" value="1"/>
</dbReference>
<dbReference type="Pfam" id="PF01795">
    <property type="entry name" value="Methyltransf_5"/>
    <property type="match status" value="1"/>
</dbReference>
<dbReference type="PIRSF" id="PIRSF004486">
    <property type="entry name" value="MraW"/>
    <property type="match status" value="1"/>
</dbReference>
<dbReference type="SUPFAM" id="SSF81799">
    <property type="entry name" value="Putative methyltransferase TM0872, insert domain"/>
    <property type="match status" value="1"/>
</dbReference>
<dbReference type="SUPFAM" id="SSF53335">
    <property type="entry name" value="S-adenosyl-L-methionine-dependent methyltransferases"/>
    <property type="match status" value="1"/>
</dbReference>
<organism>
    <name type="scientific">Halorhodospira halophila (strain DSM 244 / SL1)</name>
    <name type="common">Ectothiorhodospira halophila (strain DSM 244 / SL1)</name>
    <dbReference type="NCBI Taxonomy" id="349124"/>
    <lineage>
        <taxon>Bacteria</taxon>
        <taxon>Pseudomonadati</taxon>
        <taxon>Pseudomonadota</taxon>
        <taxon>Gammaproteobacteria</taxon>
        <taxon>Chromatiales</taxon>
        <taxon>Ectothiorhodospiraceae</taxon>
        <taxon>Halorhodospira</taxon>
    </lineage>
</organism>
<reference key="1">
    <citation type="submission" date="2006-12" db="EMBL/GenBank/DDBJ databases">
        <title>Complete sequence of Halorhodospira halophila SL1.</title>
        <authorList>
            <consortium name="US DOE Joint Genome Institute"/>
            <person name="Copeland A."/>
            <person name="Lucas S."/>
            <person name="Lapidus A."/>
            <person name="Barry K."/>
            <person name="Detter J.C."/>
            <person name="Glavina del Rio T."/>
            <person name="Hammon N."/>
            <person name="Israni S."/>
            <person name="Dalin E."/>
            <person name="Tice H."/>
            <person name="Pitluck S."/>
            <person name="Saunders E."/>
            <person name="Brettin T."/>
            <person name="Bruce D."/>
            <person name="Han C."/>
            <person name="Tapia R."/>
            <person name="Schmutz J."/>
            <person name="Larimer F."/>
            <person name="Land M."/>
            <person name="Hauser L."/>
            <person name="Kyrpides N."/>
            <person name="Mikhailova N."/>
            <person name="Hoff W."/>
            <person name="Richardson P."/>
        </authorList>
    </citation>
    <scope>NUCLEOTIDE SEQUENCE [LARGE SCALE GENOMIC DNA]</scope>
    <source>
        <strain>DSM 244 / SL1</strain>
    </source>
</reference>
<accession>A1WYV1</accession>
<keyword id="KW-0963">Cytoplasm</keyword>
<keyword id="KW-0489">Methyltransferase</keyword>
<keyword id="KW-1185">Reference proteome</keyword>
<keyword id="KW-0698">rRNA processing</keyword>
<keyword id="KW-0949">S-adenosyl-L-methionine</keyword>
<keyword id="KW-0808">Transferase</keyword>
<feature type="chain" id="PRO_0000386923" description="Ribosomal RNA small subunit methyltransferase H">
    <location>
        <begin position="1"/>
        <end position="324"/>
    </location>
</feature>
<feature type="binding site" evidence="1">
    <location>
        <begin position="47"/>
        <end position="49"/>
    </location>
    <ligand>
        <name>S-adenosyl-L-methionine</name>
        <dbReference type="ChEBI" id="CHEBI:59789"/>
    </ligand>
</feature>
<feature type="binding site" evidence="1">
    <location>
        <position position="67"/>
    </location>
    <ligand>
        <name>S-adenosyl-L-methionine</name>
        <dbReference type="ChEBI" id="CHEBI:59789"/>
    </ligand>
</feature>
<feature type="binding site" evidence="1">
    <location>
        <position position="96"/>
    </location>
    <ligand>
        <name>S-adenosyl-L-methionine</name>
        <dbReference type="ChEBI" id="CHEBI:59789"/>
    </ligand>
</feature>
<feature type="binding site" evidence="1">
    <location>
        <position position="115"/>
    </location>
    <ligand>
        <name>S-adenosyl-L-methionine</name>
        <dbReference type="ChEBI" id="CHEBI:59789"/>
    </ligand>
</feature>
<feature type="binding site" evidence="1">
    <location>
        <position position="122"/>
    </location>
    <ligand>
        <name>S-adenosyl-L-methionine</name>
        <dbReference type="ChEBI" id="CHEBI:59789"/>
    </ligand>
</feature>
<name>RSMH_HALHL</name>
<protein>
    <recommendedName>
        <fullName evidence="1">Ribosomal RNA small subunit methyltransferase H</fullName>
        <ecNumber evidence="1">2.1.1.199</ecNumber>
    </recommendedName>
    <alternativeName>
        <fullName evidence="1">16S rRNA m(4)C1402 methyltransferase</fullName>
    </alternativeName>
    <alternativeName>
        <fullName evidence="1">rRNA (cytosine-N(4)-)-methyltransferase RsmH</fullName>
    </alternativeName>
</protein>
<evidence type="ECO:0000255" key="1">
    <source>
        <dbReference type="HAMAP-Rule" id="MF_01007"/>
    </source>
</evidence>
<proteinExistence type="inferred from homology"/>
<gene>
    <name evidence="1" type="primary">rsmH</name>
    <name type="synonym">mraW</name>
    <name type="ordered locus">Hhal_2099</name>
</gene>